<gene>
    <name type="ordered locus">At1g36730</name>
    <name type="ORF">T15P17.7</name>
</gene>
<organism>
    <name type="scientific">Arabidopsis thaliana</name>
    <name type="common">Mouse-ear cress</name>
    <dbReference type="NCBI Taxonomy" id="3702"/>
    <lineage>
        <taxon>Eukaryota</taxon>
        <taxon>Viridiplantae</taxon>
        <taxon>Streptophyta</taxon>
        <taxon>Embryophyta</taxon>
        <taxon>Tracheophyta</taxon>
        <taxon>Spermatophyta</taxon>
        <taxon>Magnoliopsida</taxon>
        <taxon>eudicotyledons</taxon>
        <taxon>Gunneridae</taxon>
        <taxon>Pentapetalae</taxon>
        <taxon>rosids</taxon>
        <taxon>malvids</taxon>
        <taxon>Brassicales</taxon>
        <taxon>Brassicaceae</taxon>
        <taxon>Camelineae</taxon>
        <taxon>Arabidopsis</taxon>
    </lineage>
</organism>
<sequence>MALQNIGASNRDDAFYRYKMPRMMTKIEGRGNGIKTNVVNMVEIAKALGRPAAYTTKYFGCELGAQSKFDEKNGTSLVNGAHDTSKLAGLLENFIKKYVQCYGCGNPETEILITKTQMLQLKCAACGFLSDVDMRDKLTSFILKNPPEQKKSSKDKKSMRRAEKERLREGEAADEEMRKLKKEAASKKKAATTGTSKDKVSKKKDHSPPRSLSDENDQADSEEDDDDVQWQTDTSREAAEKRMKEQLSAVTAEMVMLSTVEEKKPVAEVKKAPEQVHENGNSKIPENAHEKLVNEIKELLSSGSSPTQLKTALASNSANPQEKMDALFSALFGGTGKGFAKEVIKKKKYLLALMMMQEEAGAPAQMGLLNGIESFCMKASAEAAKEVALVIKGLYDEDILDEDVIVEWYNKGVKSSPVLKNVTPFIEWLQNAESESEEE</sequence>
<protein>
    <recommendedName>
        <fullName>Probable eukaryotic translation initiation factor 5-1</fullName>
        <shortName>eIF-5 1</shortName>
    </recommendedName>
</protein>
<keyword id="KW-0342">GTP-binding</keyword>
<keyword id="KW-0396">Initiation factor</keyword>
<keyword id="KW-0547">Nucleotide-binding</keyword>
<keyword id="KW-0597">Phosphoprotein</keyword>
<keyword id="KW-0648">Protein biosynthesis</keyword>
<keyword id="KW-1185">Reference proteome</keyword>
<dbReference type="EMBL" id="AC025782">
    <property type="protein sequence ID" value="AAG51259.1"/>
    <property type="molecule type" value="Genomic_DNA"/>
</dbReference>
<dbReference type="EMBL" id="CP002684">
    <property type="protein sequence ID" value="AEE31871.1"/>
    <property type="molecule type" value="Genomic_DNA"/>
</dbReference>
<dbReference type="EMBL" id="AY056208">
    <property type="protein sequence ID" value="AAL07057.1"/>
    <property type="molecule type" value="mRNA"/>
</dbReference>
<dbReference type="EMBL" id="AY064061">
    <property type="protein sequence ID" value="AAL36417.1"/>
    <property type="molecule type" value="mRNA"/>
</dbReference>
<dbReference type="EMBL" id="AY096371">
    <property type="protein sequence ID" value="AAM20012.1"/>
    <property type="molecule type" value="mRNA"/>
</dbReference>
<dbReference type="PIR" id="C86487">
    <property type="entry name" value="C86487"/>
</dbReference>
<dbReference type="RefSeq" id="NP_174877.1">
    <property type="nucleotide sequence ID" value="NM_103340.3"/>
</dbReference>
<dbReference type="SMR" id="Q9C8F1"/>
<dbReference type="FunCoup" id="Q9C8F1">
    <property type="interactions" value="4416"/>
</dbReference>
<dbReference type="STRING" id="3702.Q9C8F1"/>
<dbReference type="iPTMnet" id="Q9C8F1"/>
<dbReference type="PaxDb" id="3702-AT1G36730.1"/>
<dbReference type="ProteomicsDB" id="250679"/>
<dbReference type="EnsemblPlants" id="AT1G36730.1">
    <property type="protein sequence ID" value="AT1G36730.1"/>
    <property type="gene ID" value="AT1G36730"/>
</dbReference>
<dbReference type="GeneID" id="840582"/>
<dbReference type="Gramene" id="AT1G36730.1">
    <property type="protein sequence ID" value="AT1G36730.1"/>
    <property type="gene ID" value="AT1G36730"/>
</dbReference>
<dbReference type="KEGG" id="ath:AT1G36730"/>
<dbReference type="Araport" id="AT1G36730"/>
<dbReference type="TAIR" id="AT1G36730"/>
<dbReference type="eggNOG" id="KOG2767">
    <property type="taxonomic scope" value="Eukaryota"/>
</dbReference>
<dbReference type="HOGENOM" id="CLU_026663_1_1_1"/>
<dbReference type="InParanoid" id="Q9C8F1"/>
<dbReference type="OMA" id="MLNLKCA"/>
<dbReference type="OrthoDB" id="10250831at2759"/>
<dbReference type="PhylomeDB" id="Q9C8F1"/>
<dbReference type="CD-CODE" id="4299E36E">
    <property type="entry name" value="Nucleolus"/>
</dbReference>
<dbReference type="PRO" id="PR:Q9C8F1"/>
<dbReference type="Proteomes" id="UP000006548">
    <property type="component" value="Chromosome 1"/>
</dbReference>
<dbReference type="ExpressionAtlas" id="Q9C8F1">
    <property type="expression patterns" value="baseline and differential"/>
</dbReference>
<dbReference type="GO" id="GO:0005525">
    <property type="term" value="F:GTP binding"/>
    <property type="evidence" value="ECO:0007669"/>
    <property type="project" value="UniProtKB-KW"/>
</dbReference>
<dbReference type="GO" id="GO:0003743">
    <property type="term" value="F:translation initiation factor activity"/>
    <property type="evidence" value="ECO:0007669"/>
    <property type="project" value="UniProtKB-KW"/>
</dbReference>
<dbReference type="CDD" id="cd11561">
    <property type="entry name" value="W2_eIF5"/>
    <property type="match status" value="1"/>
</dbReference>
<dbReference type="FunFam" id="2.20.25.350:FF:000001">
    <property type="entry name" value="Eukaryotic translation initiation factor 5"/>
    <property type="match status" value="1"/>
</dbReference>
<dbReference type="FunFam" id="3.30.30.170:FF:000002">
    <property type="entry name" value="Eukaryotic translation initiation factor 5"/>
    <property type="match status" value="1"/>
</dbReference>
<dbReference type="Gene3D" id="1.25.40.180">
    <property type="match status" value="1"/>
</dbReference>
<dbReference type="Gene3D" id="2.20.25.350">
    <property type="match status" value="1"/>
</dbReference>
<dbReference type="Gene3D" id="3.30.30.170">
    <property type="match status" value="1"/>
</dbReference>
<dbReference type="InterPro" id="IPR016024">
    <property type="entry name" value="ARM-type_fold"/>
</dbReference>
<dbReference type="InterPro" id="IPR045196">
    <property type="entry name" value="IF2/IF5"/>
</dbReference>
<dbReference type="InterPro" id="IPR002735">
    <property type="entry name" value="Transl_init_fac_IF2/IF5_dom"/>
</dbReference>
<dbReference type="InterPro" id="IPR016189">
    <property type="entry name" value="Transl_init_fac_IF2/IF5_N"/>
</dbReference>
<dbReference type="InterPro" id="IPR016190">
    <property type="entry name" value="Transl_init_fac_IF2/IF5_Zn-bd"/>
</dbReference>
<dbReference type="InterPro" id="IPR003307">
    <property type="entry name" value="W2_domain"/>
</dbReference>
<dbReference type="PANTHER" id="PTHR23001">
    <property type="entry name" value="EUKARYOTIC TRANSLATION INITIATION FACTOR"/>
    <property type="match status" value="1"/>
</dbReference>
<dbReference type="PANTHER" id="PTHR23001:SF7">
    <property type="entry name" value="EUKARYOTIC TRANSLATION INITIATION FACTOR 5"/>
    <property type="match status" value="1"/>
</dbReference>
<dbReference type="Pfam" id="PF01873">
    <property type="entry name" value="eIF-5_eIF-2B"/>
    <property type="match status" value="1"/>
</dbReference>
<dbReference type="Pfam" id="PF02020">
    <property type="entry name" value="W2"/>
    <property type="match status" value="1"/>
</dbReference>
<dbReference type="SMART" id="SM00653">
    <property type="entry name" value="eIF2B_5"/>
    <property type="match status" value="1"/>
</dbReference>
<dbReference type="SMART" id="SM00515">
    <property type="entry name" value="eIF5C"/>
    <property type="match status" value="1"/>
</dbReference>
<dbReference type="SUPFAM" id="SSF48371">
    <property type="entry name" value="ARM repeat"/>
    <property type="match status" value="1"/>
</dbReference>
<dbReference type="SUPFAM" id="SSF100966">
    <property type="entry name" value="Translation initiation factor 2 beta, aIF2beta, N-terminal domain"/>
    <property type="match status" value="1"/>
</dbReference>
<dbReference type="SUPFAM" id="SSF75689">
    <property type="entry name" value="Zinc-binding domain of translation initiation factor 2 beta"/>
    <property type="match status" value="1"/>
</dbReference>
<dbReference type="PROSITE" id="PS51363">
    <property type="entry name" value="W2"/>
    <property type="match status" value="1"/>
</dbReference>
<accession>Q9C8F1</accession>
<accession>Q93ZX3</accession>
<reference key="1">
    <citation type="journal article" date="2000" name="Nature">
        <title>Sequence and analysis of chromosome 1 of the plant Arabidopsis thaliana.</title>
        <authorList>
            <person name="Theologis A."/>
            <person name="Ecker J.R."/>
            <person name="Palm C.J."/>
            <person name="Federspiel N.A."/>
            <person name="Kaul S."/>
            <person name="White O."/>
            <person name="Alonso J."/>
            <person name="Altafi H."/>
            <person name="Araujo R."/>
            <person name="Bowman C.L."/>
            <person name="Brooks S.Y."/>
            <person name="Buehler E."/>
            <person name="Chan A."/>
            <person name="Chao Q."/>
            <person name="Chen H."/>
            <person name="Cheuk R.F."/>
            <person name="Chin C.W."/>
            <person name="Chung M.K."/>
            <person name="Conn L."/>
            <person name="Conway A.B."/>
            <person name="Conway A.R."/>
            <person name="Creasy T.H."/>
            <person name="Dewar K."/>
            <person name="Dunn P."/>
            <person name="Etgu P."/>
            <person name="Feldblyum T.V."/>
            <person name="Feng J.-D."/>
            <person name="Fong B."/>
            <person name="Fujii C.Y."/>
            <person name="Gill J.E."/>
            <person name="Goldsmith A.D."/>
            <person name="Haas B."/>
            <person name="Hansen N.F."/>
            <person name="Hughes B."/>
            <person name="Huizar L."/>
            <person name="Hunter J.L."/>
            <person name="Jenkins J."/>
            <person name="Johnson-Hopson C."/>
            <person name="Khan S."/>
            <person name="Khaykin E."/>
            <person name="Kim C.J."/>
            <person name="Koo H.L."/>
            <person name="Kremenetskaia I."/>
            <person name="Kurtz D.B."/>
            <person name="Kwan A."/>
            <person name="Lam B."/>
            <person name="Langin-Hooper S."/>
            <person name="Lee A."/>
            <person name="Lee J.M."/>
            <person name="Lenz C.A."/>
            <person name="Li J.H."/>
            <person name="Li Y.-P."/>
            <person name="Lin X."/>
            <person name="Liu S.X."/>
            <person name="Liu Z.A."/>
            <person name="Luros J.S."/>
            <person name="Maiti R."/>
            <person name="Marziali A."/>
            <person name="Militscher J."/>
            <person name="Miranda M."/>
            <person name="Nguyen M."/>
            <person name="Nierman W.C."/>
            <person name="Osborne B.I."/>
            <person name="Pai G."/>
            <person name="Peterson J."/>
            <person name="Pham P.K."/>
            <person name="Rizzo M."/>
            <person name="Rooney T."/>
            <person name="Rowley D."/>
            <person name="Sakano H."/>
            <person name="Salzberg S.L."/>
            <person name="Schwartz J.R."/>
            <person name="Shinn P."/>
            <person name="Southwick A.M."/>
            <person name="Sun H."/>
            <person name="Tallon L.J."/>
            <person name="Tambunga G."/>
            <person name="Toriumi M.J."/>
            <person name="Town C.D."/>
            <person name="Utterback T."/>
            <person name="Van Aken S."/>
            <person name="Vaysberg M."/>
            <person name="Vysotskaia V.S."/>
            <person name="Walker M."/>
            <person name="Wu D."/>
            <person name="Yu G."/>
            <person name="Fraser C.M."/>
            <person name="Venter J.C."/>
            <person name="Davis R.W."/>
        </authorList>
    </citation>
    <scope>NUCLEOTIDE SEQUENCE [LARGE SCALE GENOMIC DNA]</scope>
    <source>
        <strain>cv. Columbia</strain>
    </source>
</reference>
<reference key="2">
    <citation type="journal article" date="2017" name="Plant J.">
        <title>Araport11: a complete reannotation of the Arabidopsis thaliana reference genome.</title>
        <authorList>
            <person name="Cheng C.Y."/>
            <person name="Krishnakumar V."/>
            <person name="Chan A.P."/>
            <person name="Thibaud-Nissen F."/>
            <person name="Schobel S."/>
            <person name="Town C.D."/>
        </authorList>
    </citation>
    <scope>GENOME REANNOTATION</scope>
    <source>
        <strain>cv. Columbia</strain>
    </source>
</reference>
<reference key="3">
    <citation type="journal article" date="2003" name="Science">
        <title>Empirical analysis of transcriptional activity in the Arabidopsis genome.</title>
        <authorList>
            <person name="Yamada K."/>
            <person name="Lim J."/>
            <person name="Dale J.M."/>
            <person name="Chen H."/>
            <person name="Shinn P."/>
            <person name="Palm C.J."/>
            <person name="Southwick A.M."/>
            <person name="Wu H.C."/>
            <person name="Kim C.J."/>
            <person name="Nguyen M."/>
            <person name="Pham P.K."/>
            <person name="Cheuk R.F."/>
            <person name="Karlin-Newmann G."/>
            <person name="Liu S.X."/>
            <person name="Lam B."/>
            <person name="Sakano H."/>
            <person name="Wu T."/>
            <person name="Yu G."/>
            <person name="Miranda M."/>
            <person name="Quach H.L."/>
            <person name="Tripp M."/>
            <person name="Chang C.H."/>
            <person name="Lee J.M."/>
            <person name="Toriumi M.J."/>
            <person name="Chan M.M."/>
            <person name="Tang C.C."/>
            <person name="Onodera C.S."/>
            <person name="Deng J.M."/>
            <person name="Akiyama K."/>
            <person name="Ansari Y."/>
            <person name="Arakawa T."/>
            <person name="Banh J."/>
            <person name="Banno F."/>
            <person name="Bowser L."/>
            <person name="Brooks S.Y."/>
            <person name="Carninci P."/>
            <person name="Chao Q."/>
            <person name="Choy N."/>
            <person name="Enju A."/>
            <person name="Goldsmith A.D."/>
            <person name="Gurjal M."/>
            <person name="Hansen N.F."/>
            <person name="Hayashizaki Y."/>
            <person name="Johnson-Hopson C."/>
            <person name="Hsuan V.W."/>
            <person name="Iida K."/>
            <person name="Karnes M."/>
            <person name="Khan S."/>
            <person name="Koesema E."/>
            <person name="Ishida J."/>
            <person name="Jiang P.X."/>
            <person name="Jones T."/>
            <person name="Kawai J."/>
            <person name="Kamiya A."/>
            <person name="Meyers C."/>
            <person name="Nakajima M."/>
            <person name="Narusaka M."/>
            <person name="Seki M."/>
            <person name="Sakurai T."/>
            <person name="Satou M."/>
            <person name="Tamse R."/>
            <person name="Vaysberg M."/>
            <person name="Wallender E.K."/>
            <person name="Wong C."/>
            <person name="Yamamura Y."/>
            <person name="Yuan S."/>
            <person name="Shinozaki K."/>
            <person name="Davis R.W."/>
            <person name="Theologis A."/>
            <person name="Ecker J.R."/>
        </authorList>
    </citation>
    <scope>NUCLEOTIDE SEQUENCE [LARGE SCALE MRNA]</scope>
    <source>
        <strain>cv. Columbia</strain>
    </source>
</reference>
<feature type="chain" id="PRO_0000212522" description="Probable eukaryotic translation initiation factor 5-1">
    <location>
        <begin position="1"/>
        <end position="439"/>
    </location>
</feature>
<feature type="domain" description="W2" evidence="4">
    <location>
        <begin position="283"/>
        <end position="439"/>
    </location>
</feature>
<feature type="region of interest" description="Disordered" evidence="5">
    <location>
        <begin position="143"/>
        <end position="245"/>
    </location>
</feature>
<feature type="compositionally biased region" description="Basic and acidic residues" evidence="5">
    <location>
        <begin position="147"/>
        <end position="186"/>
    </location>
</feature>
<feature type="compositionally biased region" description="Acidic residues" evidence="5">
    <location>
        <begin position="214"/>
        <end position="228"/>
    </location>
</feature>
<feature type="compositionally biased region" description="Basic and acidic residues" evidence="5">
    <location>
        <begin position="234"/>
        <end position="245"/>
    </location>
</feature>
<feature type="binding site" evidence="3">
    <location>
        <begin position="29"/>
        <end position="36"/>
    </location>
    <ligand>
        <name>GTP</name>
        <dbReference type="ChEBI" id="CHEBI:37565"/>
    </ligand>
</feature>
<feature type="modified residue" description="Phosphothreonine" evidence="2">
    <location>
        <position position="232"/>
    </location>
</feature>
<feature type="modified residue" description="Phosphoserine" evidence="2">
    <location>
        <position position="434"/>
    </location>
</feature>
<feature type="modified residue" description="Phosphoserine" evidence="2">
    <location>
        <position position="436"/>
    </location>
</feature>
<feature type="sequence conflict" description="In Ref. 3; AAL07057." evidence="6" ref="3">
    <original>V</original>
    <variation>A</variation>
    <location>
        <position position="250"/>
    </location>
</feature>
<name>IF5Y_ARATH</name>
<proteinExistence type="evidence at transcript level"/>
<comment type="function">
    <text evidence="1">Catalyzes the hydrolysis of GTP bound to the 40S ribosomal initiation complex (40S.mRNA.Met-tRNA[F].eIF-2.GTP) with the subsequent joining of a 60S ribosomal subunit resulting in the release of eIF-2 and the guanine nucleotide. The subsequent joining of a 60S ribosomal subunit results in the formation of a functional 80S initiation complex (80S.mRNA.Met-tRNA[F]) (By similarity).</text>
</comment>
<comment type="similarity">
    <text evidence="6">Belongs to the eIF-2-beta/eIF-5 family.</text>
</comment>
<evidence type="ECO:0000250" key="1"/>
<evidence type="ECO:0000250" key="2">
    <source>
        <dbReference type="UniProtKB" id="Q9S825"/>
    </source>
</evidence>
<evidence type="ECO:0000255" key="3"/>
<evidence type="ECO:0000255" key="4">
    <source>
        <dbReference type="PROSITE-ProRule" id="PRU00695"/>
    </source>
</evidence>
<evidence type="ECO:0000256" key="5">
    <source>
        <dbReference type="SAM" id="MobiDB-lite"/>
    </source>
</evidence>
<evidence type="ECO:0000305" key="6"/>